<evidence type="ECO:0000269" key="1">
    <source>
    </source>
</evidence>
<evidence type="ECO:0000303" key="2">
    <source>
    </source>
</evidence>
<evidence type="ECO:0000305" key="3"/>
<evidence type="ECO:0000305" key="4">
    <source>
    </source>
</evidence>
<keyword id="KW-0044">Antibiotic</keyword>
<keyword id="KW-0929">Antimicrobial</keyword>
<keyword id="KW-0903">Direct protein sequencing</keyword>
<keyword id="KW-0472">Membrane</keyword>
<keyword id="KW-0964">Secreted</keyword>
<keyword id="KW-1052">Target cell membrane</keyword>
<keyword id="KW-1053">Target membrane</keyword>
<keyword id="KW-0800">Toxin</keyword>
<accession>P0DV17</accession>
<feature type="peptide" id="PRO_0000454518" description="M-poneritoxin-Nc3a" evidence="1">
    <location>
        <begin position="1"/>
        <end position="30"/>
    </location>
</feature>
<proteinExistence type="evidence at protein level"/>
<organism>
    <name type="scientific">Neoponera commutata</name>
    <name type="common">Large hunting ant</name>
    <name type="synonym">Pachycondyla commutata</name>
    <dbReference type="NCBI Taxonomy" id="613619"/>
    <lineage>
        <taxon>Eukaryota</taxon>
        <taxon>Metazoa</taxon>
        <taxon>Ecdysozoa</taxon>
        <taxon>Arthropoda</taxon>
        <taxon>Hexapoda</taxon>
        <taxon>Insecta</taxon>
        <taxon>Pterygota</taxon>
        <taxon>Neoptera</taxon>
        <taxon>Endopterygota</taxon>
        <taxon>Hymenoptera</taxon>
        <taxon>Apocrita</taxon>
        <taxon>Aculeata</taxon>
        <taxon>Formicoidea</taxon>
        <taxon>Formicidae</taxon>
        <taxon>Ponerinae</taxon>
        <taxon>Ponerini</taxon>
        <taxon>Pachycondyla</taxon>
    </lineage>
</organism>
<reference key="1">
    <citation type="journal article" date="2021" name="Biochem. Pharmacol.">
        <title>Multipurpose peptides: the venoms of Amazonian stinging ants contain anthelmintic ponericins with diverse predatory and defensive activities.</title>
        <authorList>
            <person name="Nixon S.A."/>
            <person name="Robinson S.D."/>
            <person name="Agwa A.J."/>
            <person name="Walker A.A."/>
            <person name="Choudhary S."/>
            <person name="Touchard A."/>
            <person name="Undheim E.A.B."/>
            <person name="Robertson A."/>
            <person name="Vetter I."/>
            <person name="Schroeder C.I."/>
            <person name="Kotze A.C."/>
            <person name="Herzig V."/>
            <person name="King G.F."/>
        </authorList>
    </citation>
    <scope>PROTEIN SEQUENCE</scope>
    <scope>FUNCTION</scope>
    <scope>SUBCELLULAR LOCATION</scope>
    <scope>MASS SPECTROMETRY</scope>
    <scope>SYNTHESIS</scope>
    <scope>TOXIC DOSE</scope>
    <scope>BIOASSAY</scope>
    <source>
        <tissue>Venom</tissue>
    </source>
</reference>
<sequence>GWKDWLNKAKDFIKEKGPEILRAAANAAIN</sequence>
<name>GTX3A_NEOCU</name>
<comment type="function">
    <text evidence="1">Membrane-perturbating peptide with multiple activities (PubMed:34302796). It is insecticidal, since it induces contractile paralysis in insects (L.cuprina) during several hours and death after 24 hours (PubMed:34302796). It shows a relatively strong and broad-spectrum antibacterial activity against both Gram-positive and Gram-negative bacteria (MIC&lt;20 uM) (PubMed:34302796). It is also antiparasitic, since it potently inhibits the larval development of the major pathogenic nematode of ruminants (H.contortus, IC(50)=5.6 uM) and reduces the motility of adult males of the other nematode B.malayi (PubMed:34302796). It also shows cytotoxic activity against HEK293 cells (EC(50)=5-7 uM) but does not induce hemolysis in human erythrocytes (PubMed:34302796). In addition, it causes a moderate increase in intracellular calcium concentration on neuronal and epithelial cell lines, which supports a non-specific membrane perturbation mechanism of action (PubMed:34302796). In vivo, it induces pain by intraplantar injection into mice, suggesting a defensive function against vertebrate predators (PubMed:34302796).</text>
</comment>
<comment type="subcellular location">
    <subcellularLocation>
        <location evidence="1">Secreted</location>
    </subcellularLocation>
    <subcellularLocation>
        <location evidence="4">Target cell membrane</location>
    </subcellularLocation>
    <text evidence="4">Adopts an alpha-helical conformation in membrane-mimetic environments.</text>
</comment>
<comment type="tissue specificity">
    <text evidence="4">Expressed by the venom gland.</text>
</comment>
<comment type="mass spectrometry">
    <text>Monoisotopic mass.</text>
</comment>
<comment type="toxic dose">
    <text evidence="1">PD(50) is 0.5 nmol/g 1 hour after injection into L.cuprina. LD(50) is 3.5 nmol/g 24 hours after injection into L.cuprina (PubMed:34302796). In vivo, it induces pain by intraplantar injection into mice, suggesting a defensive function against vertebrate predators (PubMed:34302796).</text>
</comment>
<comment type="similarity">
    <text evidence="3">Belongs to the ponericin-G family.</text>
</comment>
<protein>
    <recommendedName>
        <fullName evidence="2">M-poneritoxin-Nc3a</fullName>
        <shortName evidence="2">M-PONTX-Nc3a</shortName>
    </recommendedName>
    <alternativeName>
        <fullName evidence="3">Poneratoxin</fullName>
    </alternativeName>
    <alternativeName>
        <fullName evidence="2">Ponericin Nc3a</fullName>
    </alternativeName>
</protein>
<dbReference type="SMR" id="P0DV17"/>
<dbReference type="GO" id="GO:0005576">
    <property type="term" value="C:extracellular region"/>
    <property type="evidence" value="ECO:0007669"/>
    <property type="project" value="UniProtKB-SubCell"/>
</dbReference>
<dbReference type="GO" id="GO:0016020">
    <property type="term" value="C:membrane"/>
    <property type="evidence" value="ECO:0007669"/>
    <property type="project" value="UniProtKB-KW"/>
</dbReference>
<dbReference type="GO" id="GO:0044218">
    <property type="term" value="C:other organism cell membrane"/>
    <property type="evidence" value="ECO:0007669"/>
    <property type="project" value="UniProtKB-KW"/>
</dbReference>
<dbReference type="GO" id="GO:0090729">
    <property type="term" value="F:toxin activity"/>
    <property type="evidence" value="ECO:0007669"/>
    <property type="project" value="UniProtKB-KW"/>
</dbReference>
<dbReference type="GO" id="GO:0042742">
    <property type="term" value="P:defense response to bacterium"/>
    <property type="evidence" value="ECO:0007669"/>
    <property type="project" value="UniProtKB-KW"/>
</dbReference>
<dbReference type="InterPro" id="IPR010002">
    <property type="entry name" value="Poneritoxin"/>
</dbReference>
<dbReference type="Pfam" id="PF07442">
    <property type="entry name" value="Ponericin"/>
    <property type="match status" value="1"/>
</dbReference>